<sequence>MAKLAVNVDHVATLRQARGAAYPEPAAAALAAEAAGADAIVVHLREDRRHINERDVRVIKEVIRTRLILEMAATPKMLGIALSLKPHTVTLVPEKREEITTEGGLDLINHHSSIKQTVEALKNAGIMVSIFIDPDLDQIKMAHRIDADMIEIHTGAFCDAVNEHQRQREFTRIVDAAKIGTRLKLSVNAGHGICYNTIKAFQGLDEIDEFSIGHSIVARAVLTGMDRAVRDMLALIRAL</sequence>
<reference key="1">
    <citation type="journal article" date="2009" name="Environ. Microbiol.">
        <title>Genome sequence of Desulfobacterium autotrophicum HRM2, a marine sulfate reducer oxidizing organic carbon completely to carbon dioxide.</title>
        <authorList>
            <person name="Strittmatter A.W."/>
            <person name="Liesegang H."/>
            <person name="Rabus R."/>
            <person name="Decker I."/>
            <person name="Amann J."/>
            <person name="Andres S."/>
            <person name="Henne A."/>
            <person name="Fricke W.F."/>
            <person name="Martinez-Arias R."/>
            <person name="Bartels D."/>
            <person name="Goesmann A."/>
            <person name="Krause L."/>
            <person name="Puehler A."/>
            <person name="Klenk H.P."/>
            <person name="Richter M."/>
            <person name="Schuler M."/>
            <person name="Gloeckner F.O."/>
            <person name="Meyerdierks A."/>
            <person name="Gottschalk G."/>
            <person name="Amann R."/>
        </authorList>
    </citation>
    <scope>NUCLEOTIDE SEQUENCE [LARGE SCALE GENOMIC DNA]</scope>
    <source>
        <strain>ATCC 43914 / DSM 3382 / VKM B-1955 / HRM2</strain>
    </source>
</reference>
<feature type="chain" id="PRO_1000204807" description="Pyridoxine 5'-phosphate synthase">
    <location>
        <begin position="1"/>
        <end position="239"/>
    </location>
</feature>
<feature type="active site" description="Proton acceptor" evidence="1">
    <location>
        <position position="43"/>
    </location>
</feature>
<feature type="active site" description="Proton acceptor" evidence="1">
    <location>
        <position position="70"/>
    </location>
</feature>
<feature type="active site" description="Proton donor" evidence="1">
    <location>
        <position position="191"/>
    </location>
</feature>
<feature type="binding site" evidence="1">
    <location>
        <position position="7"/>
    </location>
    <ligand>
        <name>3-amino-2-oxopropyl phosphate</name>
        <dbReference type="ChEBI" id="CHEBI:57279"/>
    </ligand>
</feature>
<feature type="binding site" evidence="1">
    <location>
        <begin position="9"/>
        <end position="10"/>
    </location>
    <ligand>
        <name>1-deoxy-D-xylulose 5-phosphate</name>
        <dbReference type="ChEBI" id="CHEBI:57792"/>
    </ligand>
</feature>
<feature type="binding site" evidence="1">
    <location>
        <position position="18"/>
    </location>
    <ligand>
        <name>3-amino-2-oxopropyl phosphate</name>
        <dbReference type="ChEBI" id="CHEBI:57279"/>
    </ligand>
</feature>
<feature type="binding site" evidence="1">
    <location>
        <position position="45"/>
    </location>
    <ligand>
        <name>1-deoxy-D-xylulose 5-phosphate</name>
        <dbReference type="ChEBI" id="CHEBI:57792"/>
    </ligand>
</feature>
<feature type="binding site" evidence="1">
    <location>
        <position position="50"/>
    </location>
    <ligand>
        <name>1-deoxy-D-xylulose 5-phosphate</name>
        <dbReference type="ChEBI" id="CHEBI:57792"/>
    </ligand>
</feature>
<feature type="binding site" evidence="1">
    <location>
        <position position="100"/>
    </location>
    <ligand>
        <name>1-deoxy-D-xylulose 5-phosphate</name>
        <dbReference type="ChEBI" id="CHEBI:57792"/>
    </ligand>
</feature>
<feature type="binding site" evidence="1">
    <location>
        <position position="192"/>
    </location>
    <ligand>
        <name>3-amino-2-oxopropyl phosphate</name>
        <dbReference type="ChEBI" id="CHEBI:57279"/>
    </ligand>
</feature>
<feature type="binding site" evidence="1">
    <location>
        <begin position="213"/>
        <end position="214"/>
    </location>
    <ligand>
        <name>3-amino-2-oxopropyl phosphate</name>
        <dbReference type="ChEBI" id="CHEBI:57279"/>
    </ligand>
</feature>
<feature type="site" description="Transition state stabilizer" evidence="1">
    <location>
        <position position="151"/>
    </location>
</feature>
<proteinExistence type="inferred from homology"/>
<evidence type="ECO:0000255" key="1">
    <source>
        <dbReference type="HAMAP-Rule" id="MF_00279"/>
    </source>
</evidence>
<gene>
    <name evidence="1" type="primary">pdxJ</name>
    <name type="ordered locus">HRM2_35800</name>
</gene>
<accession>C0Q9S7</accession>
<comment type="function">
    <text evidence="1">Catalyzes the complicated ring closure reaction between the two acyclic compounds 1-deoxy-D-xylulose-5-phosphate (DXP) and 3-amino-2-oxopropyl phosphate (1-amino-acetone-3-phosphate or AAP) to form pyridoxine 5'-phosphate (PNP) and inorganic phosphate.</text>
</comment>
<comment type="catalytic activity">
    <reaction evidence="1">
        <text>3-amino-2-oxopropyl phosphate + 1-deoxy-D-xylulose 5-phosphate = pyridoxine 5'-phosphate + phosphate + 2 H2O + H(+)</text>
        <dbReference type="Rhea" id="RHEA:15265"/>
        <dbReference type="ChEBI" id="CHEBI:15377"/>
        <dbReference type="ChEBI" id="CHEBI:15378"/>
        <dbReference type="ChEBI" id="CHEBI:43474"/>
        <dbReference type="ChEBI" id="CHEBI:57279"/>
        <dbReference type="ChEBI" id="CHEBI:57792"/>
        <dbReference type="ChEBI" id="CHEBI:58589"/>
        <dbReference type="EC" id="2.6.99.2"/>
    </reaction>
</comment>
<comment type="pathway">
    <text evidence="1">Cofactor biosynthesis; pyridoxine 5'-phosphate biosynthesis; pyridoxine 5'-phosphate from D-erythrose 4-phosphate: step 5/5.</text>
</comment>
<comment type="subunit">
    <text evidence="1">Homooctamer; tetramer of dimers.</text>
</comment>
<comment type="subcellular location">
    <subcellularLocation>
        <location evidence="1">Cytoplasm</location>
    </subcellularLocation>
</comment>
<comment type="similarity">
    <text evidence="1">Belongs to the PNP synthase family.</text>
</comment>
<dbReference type="EC" id="2.6.99.2" evidence="1"/>
<dbReference type="EMBL" id="CP001087">
    <property type="protein sequence ID" value="ACN16645.1"/>
    <property type="molecule type" value="Genomic_DNA"/>
</dbReference>
<dbReference type="RefSeq" id="WP_015905395.1">
    <property type="nucleotide sequence ID" value="NC_012108.1"/>
</dbReference>
<dbReference type="SMR" id="C0Q9S7"/>
<dbReference type="STRING" id="177437.HRM2_35800"/>
<dbReference type="KEGG" id="dat:HRM2_35800"/>
<dbReference type="eggNOG" id="COG0854">
    <property type="taxonomic scope" value="Bacteria"/>
</dbReference>
<dbReference type="HOGENOM" id="CLU_074563_0_0_7"/>
<dbReference type="OrthoDB" id="9806590at2"/>
<dbReference type="UniPathway" id="UPA00244">
    <property type="reaction ID" value="UER00313"/>
</dbReference>
<dbReference type="Proteomes" id="UP000000442">
    <property type="component" value="Chromosome"/>
</dbReference>
<dbReference type="GO" id="GO:0005829">
    <property type="term" value="C:cytosol"/>
    <property type="evidence" value="ECO:0007669"/>
    <property type="project" value="TreeGrafter"/>
</dbReference>
<dbReference type="GO" id="GO:0033856">
    <property type="term" value="F:pyridoxine 5'-phosphate synthase activity"/>
    <property type="evidence" value="ECO:0007669"/>
    <property type="project" value="UniProtKB-EC"/>
</dbReference>
<dbReference type="GO" id="GO:0008615">
    <property type="term" value="P:pyridoxine biosynthetic process"/>
    <property type="evidence" value="ECO:0007669"/>
    <property type="project" value="UniProtKB-UniRule"/>
</dbReference>
<dbReference type="CDD" id="cd00003">
    <property type="entry name" value="PNPsynthase"/>
    <property type="match status" value="1"/>
</dbReference>
<dbReference type="Gene3D" id="3.20.20.70">
    <property type="entry name" value="Aldolase class I"/>
    <property type="match status" value="1"/>
</dbReference>
<dbReference type="HAMAP" id="MF_00279">
    <property type="entry name" value="PdxJ"/>
    <property type="match status" value="1"/>
</dbReference>
<dbReference type="InterPro" id="IPR013785">
    <property type="entry name" value="Aldolase_TIM"/>
</dbReference>
<dbReference type="InterPro" id="IPR004569">
    <property type="entry name" value="PyrdxlP_synth_PdxJ"/>
</dbReference>
<dbReference type="InterPro" id="IPR036130">
    <property type="entry name" value="Pyridoxine-5'_phos_synth"/>
</dbReference>
<dbReference type="NCBIfam" id="TIGR00559">
    <property type="entry name" value="pdxJ"/>
    <property type="match status" value="1"/>
</dbReference>
<dbReference type="NCBIfam" id="NF003625">
    <property type="entry name" value="PRK05265.1-3"/>
    <property type="match status" value="1"/>
</dbReference>
<dbReference type="NCBIfam" id="NF003627">
    <property type="entry name" value="PRK05265.1-5"/>
    <property type="match status" value="1"/>
</dbReference>
<dbReference type="PANTHER" id="PTHR30456">
    <property type="entry name" value="PYRIDOXINE 5'-PHOSPHATE SYNTHASE"/>
    <property type="match status" value="1"/>
</dbReference>
<dbReference type="PANTHER" id="PTHR30456:SF0">
    <property type="entry name" value="PYRIDOXINE 5'-PHOSPHATE SYNTHASE"/>
    <property type="match status" value="1"/>
</dbReference>
<dbReference type="Pfam" id="PF03740">
    <property type="entry name" value="PdxJ"/>
    <property type="match status" value="1"/>
</dbReference>
<dbReference type="SUPFAM" id="SSF63892">
    <property type="entry name" value="Pyridoxine 5'-phosphate synthase"/>
    <property type="match status" value="1"/>
</dbReference>
<organism>
    <name type="scientific">Desulforapulum autotrophicum (strain ATCC 43914 / DSM 3382 / VKM B-1955 / HRM2)</name>
    <name type="common">Desulfobacterium autotrophicum</name>
    <dbReference type="NCBI Taxonomy" id="177437"/>
    <lineage>
        <taxon>Bacteria</taxon>
        <taxon>Pseudomonadati</taxon>
        <taxon>Thermodesulfobacteriota</taxon>
        <taxon>Desulfobacteria</taxon>
        <taxon>Desulfobacterales</taxon>
        <taxon>Desulfobacteraceae</taxon>
        <taxon>Desulforapulum</taxon>
    </lineage>
</organism>
<keyword id="KW-0963">Cytoplasm</keyword>
<keyword id="KW-0664">Pyridoxine biosynthesis</keyword>
<keyword id="KW-1185">Reference proteome</keyword>
<keyword id="KW-0808">Transferase</keyword>
<protein>
    <recommendedName>
        <fullName evidence="1">Pyridoxine 5'-phosphate synthase</fullName>
        <shortName evidence="1">PNP synthase</shortName>
        <ecNumber evidence="1">2.6.99.2</ecNumber>
    </recommendedName>
</protein>
<name>PDXJ_DESAH</name>